<accession>O69720</accession>
<accession>I6YCX9</accession>
<accession>Q7D4X7</accession>
<evidence type="ECO:0000269" key="1">
    <source>
    </source>
</evidence>
<evidence type="ECO:0000305" key="2"/>
<evidence type="ECO:0000312" key="3">
    <source>
        <dbReference type="EMBL" id="CCP46580.1"/>
    </source>
</evidence>
<evidence type="ECO:0007744" key="4">
    <source>
    </source>
</evidence>
<protein>
    <recommendedName>
        <fullName evidence="2">Protein Rv3753c</fullName>
    </recommendedName>
</protein>
<comment type="sequence caution" evidence="1">
    <conflict type="erroneous initiation">
        <sequence resource="EMBL-CDS" id="CCP46580"/>
    </conflict>
    <text>Truncated N-terminus.</text>
</comment>
<gene>
    <name evidence="3" type="ordered locus">Rv3753c</name>
</gene>
<reference evidence="3" key="1">
    <citation type="journal article" date="1998" name="Nature">
        <title>Deciphering the biology of Mycobacterium tuberculosis from the complete genome sequence.</title>
        <authorList>
            <person name="Cole S.T."/>
            <person name="Brosch R."/>
            <person name="Parkhill J."/>
            <person name="Garnier T."/>
            <person name="Churcher C.M."/>
            <person name="Harris D.E."/>
            <person name="Gordon S.V."/>
            <person name="Eiglmeier K."/>
            <person name="Gas S."/>
            <person name="Barry C.E. III"/>
            <person name="Tekaia F."/>
            <person name="Badcock K."/>
            <person name="Basham D."/>
            <person name="Brown D."/>
            <person name="Chillingworth T."/>
            <person name="Connor R."/>
            <person name="Davies R.M."/>
            <person name="Devlin K."/>
            <person name="Feltwell T."/>
            <person name="Gentles S."/>
            <person name="Hamlin N."/>
            <person name="Holroyd S."/>
            <person name="Hornsby T."/>
            <person name="Jagels K."/>
            <person name="Krogh A."/>
            <person name="McLean J."/>
            <person name="Moule S."/>
            <person name="Murphy L.D."/>
            <person name="Oliver S."/>
            <person name="Osborne J."/>
            <person name="Quail M.A."/>
            <person name="Rajandream M.A."/>
            <person name="Rogers J."/>
            <person name="Rutter S."/>
            <person name="Seeger K."/>
            <person name="Skelton S."/>
            <person name="Squares S."/>
            <person name="Squares R."/>
            <person name="Sulston J.E."/>
            <person name="Taylor K."/>
            <person name="Whitehead S."/>
            <person name="Barrell B.G."/>
        </authorList>
    </citation>
    <scope>NUCLEOTIDE SEQUENCE [LARGE SCALE GENOMIC DNA]</scope>
    <source>
        <strain>ATCC 25618 / H37Rv</strain>
    </source>
</reference>
<reference key="2">
    <citation type="journal article" date="2022" name="Genomics">
        <title>Deep N-terminomics of Mycobacterium tuberculosis H37Rv extensively correct annotated encoding genes.</title>
        <authorList>
            <person name="Shi J."/>
            <person name="Meng S."/>
            <person name="Wan L."/>
            <person name="Zhang Z."/>
            <person name="Jiang S."/>
            <person name="Zhu H."/>
            <person name="Dai E."/>
            <person name="Chang L."/>
            <person name="Gao H."/>
            <person name="Wan K."/>
            <person name="Zhang L."/>
            <person name="Zhao X."/>
            <person name="Liu H."/>
            <person name="Lyu Z."/>
            <person name="Zhang Y."/>
            <person name="Xu P."/>
        </authorList>
    </citation>
    <scope>PROTEIN SEQUENCE OF 2-25</scope>
    <scope>SEQUENCE REVISION TO N-TERMINUS</scope>
    <source>
        <strain>H37Rv</strain>
    </source>
</reference>
<reference evidence="4" key="3">
    <citation type="journal article" date="2011" name="Mol. Cell. Proteomics">
        <title>Proteogenomic analysis of Mycobacterium tuberculosis by high resolution mass spectrometry.</title>
        <authorList>
            <person name="Kelkar D.S."/>
            <person name="Kumar D."/>
            <person name="Kumar P."/>
            <person name="Balakrishnan L."/>
            <person name="Muthusamy B."/>
            <person name="Yadav A.K."/>
            <person name="Shrivastava P."/>
            <person name="Marimuthu A."/>
            <person name="Anand S."/>
            <person name="Sundaram H."/>
            <person name="Kingsbury R."/>
            <person name="Harsha H.C."/>
            <person name="Nair B."/>
            <person name="Prasad T.S."/>
            <person name="Chauhan D.S."/>
            <person name="Katoch K."/>
            <person name="Katoch V.M."/>
            <person name="Kumar P."/>
            <person name="Chaerkady R."/>
            <person name="Ramachandran S."/>
            <person name="Dash D."/>
            <person name="Pandey A."/>
        </authorList>
    </citation>
    <scope>IDENTIFICATION BY MASS SPECTROMETRY [LARGE SCALE ANALYSIS]</scope>
</reference>
<sequence>MGAQRASMQRPAADTPDGFGVAVVREEGRWRCSPMGPKALTSLRAAETELRELRSAGAVFGLLDVDDEFFVIVRPAPSGTRLLLSDATAALDYDIAAEVLDNLDAEIDPEDLEDADPFEEGDLGLLSDIGLPEAVLGVILDETDLYADEQLGRIAREMGFADQLSAVIDRLGR</sequence>
<dbReference type="EMBL" id="AL123456">
    <property type="protein sequence ID" value="CCP46580.1"/>
    <property type="status" value="ALT_INIT"/>
    <property type="molecule type" value="Genomic_DNA"/>
</dbReference>
<dbReference type="RefSeq" id="NP_218270.3">
    <property type="nucleotide sequence ID" value="NC_000962.3"/>
</dbReference>
<dbReference type="RefSeq" id="WP_003899676.1">
    <property type="nucleotide sequence ID" value="NZ_NVQJ01000009.1"/>
</dbReference>
<dbReference type="RefSeq" id="WP_003900748.1">
    <property type="nucleotide sequence ID" value="NC_000962.3"/>
</dbReference>
<dbReference type="STRING" id="83332.Rv3753c"/>
<dbReference type="PaxDb" id="83332-Rv3753c"/>
<dbReference type="GeneID" id="885505"/>
<dbReference type="KEGG" id="mtu:Rv3753c"/>
<dbReference type="PATRIC" id="fig|83332.111.peg.4175"/>
<dbReference type="TubercuList" id="Rv3753c"/>
<dbReference type="eggNOG" id="ENOG5032FSI">
    <property type="taxonomic scope" value="Bacteria"/>
</dbReference>
<dbReference type="InParanoid" id="O69720"/>
<dbReference type="OrthoDB" id="5189541at2"/>
<dbReference type="PhylomeDB" id="O69720"/>
<dbReference type="Proteomes" id="UP000001584">
    <property type="component" value="Chromosome"/>
</dbReference>
<dbReference type="InterPro" id="IPR023869">
    <property type="entry name" value="tRNA_Adeno_NH3ase_assoc_put"/>
</dbReference>
<dbReference type="NCBIfam" id="TIGR03941">
    <property type="entry name" value="tRNA_deam_assoc"/>
    <property type="match status" value="1"/>
</dbReference>
<keyword id="KW-0903">Direct protein sequencing</keyword>
<keyword id="KW-1185">Reference proteome</keyword>
<name>Y3753_MYCTU</name>
<feature type="initiator methionine" description="Removed" evidence="1">
    <location>
        <position position="1"/>
    </location>
</feature>
<feature type="chain" id="PRO_0000456391" description="Protein Rv3753c">
    <location>
        <begin position="2"/>
        <end position="173"/>
    </location>
</feature>
<organism>
    <name type="scientific">Mycobacterium tuberculosis (strain ATCC 25618 / H37Rv)</name>
    <dbReference type="NCBI Taxonomy" id="83332"/>
    <lineage>
        <taxon>Bacteria</taxon>
        <taxon>Bacillati</taxon>
        <taxon>Actinomycetota</taxon>
        <taxon>Actinomycetes</taxon>
        <taxon>Mycobacteriales</taxon>
        <taxon>Mycobacteriaceae</taxon>
        <taxon>Mycobacterium</taxon>
        <taxon>Mycobacterium tuberculosis complex</taxon>
    </lineage>
</organism>
<proteinExistence type="evidence at protein level"/>